<accession>Q7NCV1</accession>
<keyword id="KW-0665">Pyrimidine biosynthesis</keyword>
<keyword id="KW-1185">Reference proteome</keyword>
<keyword id="KW-0808">Transferase</keyword>
<gene>
    <name evidence="1" type="primary">pyrB</name>
    <name type="ordered locus">gll2875</name>
</gene>
<reference key="1">
    <citation type="journal article" date="2003" name="DNA Res.">
        <title>Complete genome structure of Gloeobacter violaceus PCC 7421, a cyanobacterium that lacks thylakoids.</title>
        <authorList>
            <person name="Nakamura Y."/>
            <person name="Kaneko T."/>
            <person name="Sato S."/>
            <person name="Mimuro M."/>
            <person name="Miyashita H."/>
            <person name="Tsuchiya T."/>
            <person name="Sasamoto S."/>
            <person name="Watanabe A."/>
            <person name="Kawashima K."/>
            <person name="Kishida Y."/>
            <person name="Kiyokawa C."/>
            <person name="Kohara M."/>
            <person name="Matsumoto M."/>
            <person name="Matsuno A."/>
            <person name="Nakazaki N."/>
            <person name="Shimpo S."/>
            <person name="Takeuchi C."/>
            <person name="Yamada M."/>
            <person name="Tabata S."/>
        </authorList>
    </citation>
    <scope>NUCLEOTIDE SEQUENCE [LARGE SCALE GENOMIC DNA]</scope>
    <source>
        <strain>ATCC 29082 / PCC 7421</strain>
    </source>
</reference>
<feature type="chain" id="PRO_0000113138" description="Aspartate carbamoyltransferase catalytic subunit">
    <location>
        <begin position="1"/>
        <end position="329"/>
    </location>
</feature>
<feature type="binding site" evidence="1">
    <location>
        <position position="66"/>
    </location>
    <ligand>
        <name>carbamoyl phosphate</name>
        <dbReference type="ChEBI" id="CHEBI:58228"/>
    </ligand>
</feature>
<feature type="binding site" evidence="1">
    <location>
        <position position="67"/>
    </location>
    <ligand>
        <name>carbamoyl phosphate</name>
        <dbReference type="ChEBI" id="CHEBI:58228"/>
    </ligand>
</feature>
<feature type="binding site" evidence="1">
    <location>
        <position position="94"/>
    </location>
    <ligand>
        <name>L-aspartate</name>
        <dbReference type="ChEBI" id="CHEBI:29991"/>
    </ligand>
</feature>
<feature type="binding site" evidence="1">
    <location>
        <position position="116"/>
    </location>
    <ligand>
        <name>carbamoyl phosphate</name>
        <dbReference type="ChEBI" id="CHEBI:58228"/>
    </ligand>
</feature>
<feature type="binding site" evidence="1">
    <location>
        <position position="149"/>
    </location>
    <ligand>
        <name>carbamoyl phosphate</name>
        <dbReference type="ChEBI" id="CHEBI:58228"/>
    </ligand>
</feature>
<feature type="binding site" evidence="1">
    <location>
        <position position="152"/>
    </location>
    <ligand>
        <name>carbamoyl phosphate</name>
        <dbReference type="ChEBI" id="CHEBI:58228"/>
    </ligand>
</feature>
<feature type="binding site" evidence="1">
    <location>
        <position position="189"/>
    </location>
    <ligand>
        <name>L-aspartate</name>
        <dbReference type="ChEBI" id="CHEBI:29991"/>
    </ligand>
</feature>
<feature type="binding site" evidence="1">
    <location>
        <position position="243"/>
    </location>
    <ligand>
        <name>L-aspartate</name>
        <dbReference type="ChEBI" id="CHEBI:29991"/>
    </ligand>
</feature>
<feature type="binding site" evidence="1">
    <location>
        <position position="284"/>
    </location>
    <ligand>
        <name>carbamoyl phosphate</name>
        <dbReference type="ChEBI" id="CHEBI:58228"/>
    </ligand>
</feature>
<feature type="binding site" evidence="1">
    <location>
        <position position="285"/>
    </location>
    <ligand>
        <name>carbamoyl phosphate</name>
        <dbReference type="ChEBI" id="CHEBI:58228"/>
    </ligand>
</feature>
<dbReference type="EC" id="2.1.3.2" evidence="1"/>
<dbReference type="EMBL" id="BA000045">
    <property type="protein sequence ID" value="BAC90816.1"/>
    <property type="molecule type" value="Genomic_DNA"/>
</dbReference>
<dbReference type="RefSeq" id="NP_925821.1">
    <property type="nucleotide sequence ID" value="NC_005125.1"/>
</dbReference>
<dbReference type="RefSeq" id="WP_011142869.1">
    <property type="nucleotide sequence ID" value="NC_005125.1"/>
</dbReference>
<dbReference type="SMR" id="Q7NCV1"/>
<dbReference type="FunCoup" id="Q7NCV1">
    <property type="interactions" value="320"/>
</dbReference>
<dbReference type="STRING" id="251221.gene:10760379"/>
<dbReference type="EnsemblBacteria" id="BAC90816">
    <property type="protein sequence ID" value="BAC90816"/>
    <property type="gene ID" value="BAC90816"/>
</dbReference>
<dbReference type="KEGG" id="gvi:gll2875"/>
<dbReference type="PATRIC" id="fig|251221.4.peg.2905"/>
<dbReference type="eggNOG" id="COG0540">
    <property type="taxonomic scope" value="Bacteria"/>
</dbReference>
<dbReference type="HOGENOM" id="CLU_043846_2_0_3"/>
<dbReference type="InParanoid" id="Q7NCV1"/>
<dbReference type="OrthoDB" id="9774690at2"/>
<dbReference type="PhylomeDB" id="Q7NCV1"/>
<dbReference type="UniPathway" id="UPA00070">
    <property type="reaction ID" value="UER00116"/>
</dbReference>
<dbReference type="Proteomes" id="UP000000557">
    <property type="component" value="Chromosome"/>
</dbReference>
<dbReference type="GO" id="GO:0016597">
    <property type="term" value="F:amino acid binding"/>
    <property type="evidence" value="ECO:0007669"/>
    <property type="project" value="InterPro"/>
</dbReference>
<dbReference type="GO" id="GO:0004070">
    <property type="term" value="F:aspartate carbamoyltransferase activity"/>
    <property type="evidence" value="ECO:0007669"/>
    <property type="project" value="UniProtKB-UniRule"/>
</dbReference>
<dbReference type="GO" id="GO:0006207">
    <property type="term" value="P:'de novo' pyrimidine nucleobase biosynthetic process"/>
    <property type="evidence" value="ECO:0007669"/>
    <property type="project" value="InterPro"/>
</dbReference>
<dbReference type="GO" id="GO:0044205">
    <property type="term" value="P:'de novo' UMP biosynthetic process"/>
    <property type="evidence" value="ECO:0007669"/>
    <property type="project" value="UniProtKB-UniRule"/>
</dbReference>
<dbReference type="GO" id="GO:0006520">
    <property type="term" value="P:amino acid metabolic process"/>
    <property type="evidence" value="ECO:0007669"/>
    <property type="project" value="InterPro"/>
</dbReference>
<dbReference type="Gene3D" id="3.40.50.1370">
    <property type="entry name" value="Aspartate/ornithine carbamoyltransferase"/>
    <property type="match status" value="2"/>
</dbReference>
<dbReference type="HAMAP" id="MF_00001">
    <property type="entry name" value="Asp_carb_tr"/>
    <property type="match status" value="1"/>
</dbReference>
<dbReference type="InterPro" id="IPR006132">
    <property type="entry name" value="Asp/Orn_carbamoyltranf_P-bd"/>
</dbReference>
<dbReference type="InterPro" id="IPR006130">
    <property type="entry name" value="Asp/Orn_carbamoylTrfase"/>
</dbReference>
<dbReference type="InterPro" id="IPR036901">
    <property type="entry name" value="Asp/Orn_carbamoylTrfase_sf"/>
</dbReference>
<dbReference type="InterPro" id="IPR002082">
    <property type="entry name" value="Asp_carbamoyltransf"/>
</dbReference>
<dbReference type="InterPro" id="IPR006131">
    <property type="entry name" value="Asp_carbamoyltransf_Asp/Orn-bd"/>
</dbReference>
<dbReference type="NCBIfam" id="TIGR00670">
    <property type="entry name" value="asp_carb_tr"/>
    <property type="match status" value="1"/>
</dbReference>
<dbReference type="NCBIfam" id="NF002032">
    <property type="entry name" value="PRK00856.1"/>
    <property type="match status" value="1"/>
</dbReference>
<dbReference type="PANTHER" id="PTHR45753:SF6">
    <property type="entry name" value="ASPARTATE CARBAMOYLTRANSFERASE"/>
    <property type="match status" value="1"/>
</dbReference>
<dbReference type="PANTHER" id="PTHR45753">
    <property type="entry name" value="ORNITHINE CARBAMOYLTRANSFERASE, MITOCHONDRIAL"/>
    <property type="match status" value="1"/>
</dbReference>
<dbReference type="Pfam" id="PF00185">
    <property type="entry name" value="OTCace"/>
    <property type="match status" value="1"/>
</dbReference>
<dbReference type="Pfam" id="PF02729">
    <property type="entry name" value="OTCace_N"/>
    <property type="match status" value="1"/>
</dbReference>
<dbReference type="PRINTS" id="PR00100">
    <property type="entry name" value="AOTCASE"/>
</dbReference>
<dbReference type="PRINTS" id="PR00101">
    <property type="entry name" value="ATCASE"/>
</dbReference>
<dbReference type="SUPFAM" id="SSF53671">
    <property type="entry name" value="Aspartate/ornithine carbamoyltransferase"/>
    <property type="match status" value="1"/>
</dbReference>
<dbReference type="PROSITE" id="PS00097">
    <property type="entry name" value="CARBAMOYLTRANSFERASE"/>
    <property type="match status" value="1"/>
</dbReference>
<protein>
    <recommendedName>
        <fullName evidence="1">Aspartate carbamoyltransferase catalytic subunit</fullName>
        <ecNumber evidence="1">2.1.3.2</ecNumber>
    </recommendedName>
    <alternativeName>
        <fullName evidence="1">Aspartate transcarbamylase</fullName>
        <shortName evidence="1">ATCase</shortName>
    </alternativeName>
</protein>
<name>PYRB_GLOVI</name>
<comment type="function">
    <text evidence="1">Catalyzes the condensation of carbamoyl phosphate and aspartate to form carbamoyl aspartate and inorganic phosphate, the committed step in the de novo pyrimidine nucleotide biosynthesis pathway.</text>
</comment>
<comment type="catalytic activity">
    <reaction evidence="1">
        <text>carbamoyl phosphate + L-aspartate = N-carbamoyl-L-aspartate + phosphate + H(+)</text>
        <dbReference type="Rhea" id="RHEA:20013"/>
        <dbReference type="ChEBI" id="CHEBI:15378"/>
        <dbReference type="ChEBI" id="CHEBI:29991"/>
        <dbReference type="ChEBI" id="CHEBI:32814"/>
        <dbReference type="ChEBI" id="CHEBI:43474"/>
        <dbReference type="ChEBI" id="CHEBI:58228"/>
        <dbReference type="EC" id="2.1.3.2"/>
    </reaction>
</comment>
<comment type="pathway">
    <text evidence="1">Pyrimidine metabolism; UMP biosynthesis via de novo pathway; (S)-dihydroorotate from bicarbonate: step 2/3.</text>
</comment>
<comment type="subunit">
    <text evidence="1">Heterododecamer (2C3:3R2) of six catalytic PyrB chains organized as two trimers (C3), and six regulatory PyrI chains organized as three dimers (R2).</text>
</comment>
<comment type="similarity">
    <text evidence="1">Belongs to the aspartate/ornithine carbamoyltransferase superfamily. ATCase family.</text>
</comment>
<organism>
    <name type="scientific">Gloeobacter violaceus (strain ATCC 29082 / PCC 7421)</name>
    <dbReference type="NCBI Taxonomy" id="251221"/>
    <lineage>
        <taxon>Bacteria</taxon>
        <taxon>Bacillati</taxon>
        <taxon>Cyanobacteriota</taxon>
        <taxon>Cyanophyceae</taxon>
        <taxon>Gloeobacterales</taxon>
        <taxon>Gloeobacteraceae</taxon>
        <taxon>Gloeobacter</taxon>
    </lineage>
</organism>
<sequence>MLAALNAPFPWTRRHVLSLEDFSAAEYALVLQTAGSFQQVLARRNRKVPTLQGRIIVNLFFESSTRTRTSFELAAKALSADVVNFSAATSSLTKGETIFDTTRTFLAMGMDIVVVRHRDSGVPHAVARDLEQLGSPVSVINAGDGQHEHPTQALLDLFTLCTLLDAYDPRPELLAGKKIVIVGDILHSRVARSNLCSLVTCGGEVHLAGPPTLLPGEFRQYGATLHHHLAPALEGADFVMTLRLQKERMGDYLLPSLREYHRLYGITRERLALCSPGVRLLHPGPVNRGVELSSDLLDDPRLSLVSQQVTSGVAVRMALLYLLAGGKAA</sequence>
<proteinExistence type="inferred from homology"/>
<evidence type="ECO:0000255" key="1">
    <source>
        <dbReference type="HAMAP-Rule" id="MF_00001"/>
    </source>
</evidence>